<keyword id="KW-0238">DNA-binding</keyword>
<keyword id="KW-0945">Host-virus interaction</keyword>
<keyword id="KW-1090">Inhibition of host innate immune response by virus</keyword>
<keyword id="KW-0426">Late protein</keyword>
<keyword id="KW-0597">Phosphoprotein</keyword>
<keyword id="KW-1185">Reference proteome</keyword>
<keyword id="KW-0899">Viral immunoevasion</keyword>
<keyword id="KW-0946">Virion</keyword>
<dbReference type="EMBL" id="X69198">
    <property type="protein sequence ID" value="CAA48982.1"/>
    <property type="molecule type" value="Genomic_DNA"/>
</dbReference>
<dbReference type="PIR" id="C36841">
    <property type="entry name" value="C36841"/>
</dbReference>
<dbReference type="RefSeq" id="NP_042085.1">
    <property type="nucleotide sequence ID" value="NC_001611.1"/>
</dbReference>
<dbReference type="GeneID" id="1486578"/>
<dbReference type="KEGG" id="vg:1486578"/>
<dbReference type="Proteomes" id="UP000002060">
    <property type="component" value="Segment"/>
</dbReference>
<dbReference type="GO" id="GO:0044423">
    <property type="term" value="C:virion component"/>
    <property type="evidence" value="ECO:0007669"/>
    <property type="project" value="UniProtKB-KW"/>
</dbReference>
<dbReference type="GO" id="GO:0003677">
    <property type="term" value="F:DNA binding"/>
    <property type="evidence" value="ECO:0007669"/>
    <property type="project" value="UniProtKB-KW"/>
</dbReference>
<dbReference type="GO" id="GO:0052170">
    <property type="term" value="P:symbiont-mediated suppression of host innate immune response"/>
    <property type="evidence" value="ECO:0007669"/>
    <property type="project" value="UniProtKB-KW"/>
</dbReference>
<dbReference type="GO" id="GO:0019082">
    <property type="term" value="P:viral protein processing"/>
    <property type="evidence" value="ECO:0007669"/>
    <property type="project" value="InterPro"/>
</dbReference>
<dbReference type="InterPro" id="IPR006854">
    <property type="entry name" value="Phosphoprotein_F17"/>
</dbReference>
<dbReference type="Pfam" id="PF04767">
    <property type="entry name" value="Pox_F17"/>
    <property type="match status" value="1"/>
</dbReference>
<dbReference type="PIRSF" id="PIRSF003688">
    <property type="entry name" value="VAC_PP"/>
    <property type="match status" value="1"/>
</dbReference>
<accession>P0DON5</accession>
<accession>P33875</accession>
<evidence type="ECO:0000250" key="1">
    <source>
        <dbReference type="UniProtKB" id="P07396"/>
    </source>
</evidence>
<evidence type="ECO:0000256" key="2">
    <source>
        <dbReference type="SAM" id="MobiDB-lite"/>
    </source>
</evidence>
<evidence type="ECO:0000305" key="3"/>
<name>PG062_VAR67</name>
<comment type="function">
    <text evidence="1">Plays an essential role in virion assembly and morphogenesis. Also plays a role in the inhibition of host immune response by dysregulating mTOR. Sequesters host RICTOR and RPTOR, thereby disrupting mTORC1 and mTORC2 crosstalk. In turn, blocks the host antiviral response in part through mTOR-dependent degradation of cGAS, the primary poxvirus sensor.</text>
</comment>
<comment type="subunit">
    <text evidence="1">Self-associates to form high molecular-weight forms. Interacts with protein OPG157. Interacts with host RICTOR and RPTOR; these interactions disrupt the mTORC1 and mTORC2 crosstalk.</text>
</comment>
<comment type="subcellular location">
    <subcellularLocation>
        <location evidence="1">Virion</location>
    </subcellularLocation>
    <text evidence="1">Major component of the virion comprising about 10% of the virion mass.</text>
</comment>
<comment type="PTM">
    <text evidence="1">Phosphorylated on two serines. While these phosphorylations do not play a role in virion assembly; they are essential for the interaction with host RICTOR and RPTOR.</text>
</comment>
<comment type="similarity">
    <text evidence="3">Belongs to the orthopoxvirus OPG062 family.</text>
</comment>
<organism>
    <name type="scientific">Variola virus (isolate Human/India/Ind3/1967)</name>
    <name type="common">VARV</name>
    <name type="synonym">Smallpox virus</name>
    <dbReference type="NCBI Taxonomy" id="587200"/>
    <lineage>
        <taxon>Viruses</taxon>
        <taxon>Varidnaviria</taxon>
        <taxon>Bamfordvirae</taxon>
        <taxon>Nucleocytoviricota</taxon>
        <taxon>Pokkesviricetes</taxon>
        <taxon>Chitovirales</taxon>
        <taxon>Poxviridae</taxon>
        <taxon>Chordopoxvirinae</taxon>
        <taxon>Orthopoxvirus</taxon>
        <taxon>Variola virus</taxon>
    </lineage>
</organism>
<gene>
    <name type="primary">OPG062</name>
    <name type="ORF">C21R</name>
    <name type="ORF">F17R</name>
</gene>
<feature type="chain" id="PRO_0000099522" description="Phosphoprotein OPG062">
    <location>
        <begin position="1"/>
        <end position="101"/>
    </location>
</feature>
<feature type="region of interest" description="Disordered" evidence="2">
    <location>
        <begin position="48"/>
        <end position="76"/>
    </location>
</feature>
<feature type="compositionally biased region" description="Basic and acidic residues" evidence="2">
    <location>
        <begin position="56"/>
        <end position="68"/>
    </location>
</feature>
<feature type="modified residue" description="Phosphoserine" evidence="1">
    <location>
        <position position="53"/>
    </location>
</feature>
<feature type="modified residue" description="Phosphoserine" evidence="1">
    <location>
        <position position="62"/>
    </location>
</feature>
<reference key="1">
    <citation type="journal article" date="1993" name="Virus Res.">
        <title>Analysis of the nucleotide sequence of a 43 kbp segment of the genome of variola virus India-1967 strain.</title>
        <authorList>
            <person name="Shchelkunov S.N."/>
            <person name="Blinov V.M."/>
            <person name="Resenchuk S.M."/>
            <person name="Totmenin A.V."/>
            <person name="Sandakhchiev L.S."/>
        </authorList>
    </citation>
    <scope>NUCLEOTIDE SEQUENCE [GENOMIC DNA]</scope>
</reference>
<reference key="2">
    <citation type="journal article" date="1993" name="FEBS Lett.">
        <title>Genes of variola and vaccinia viruses necessary to overcome the host protective mechanisms.</title>
        <authorList>
            <person name="Shchelkunov S.N."/>
            <person name="Blinov V.M."/>
            <person name="Sandakhchiev L.S."/>
        </authorList>
    </citation>
    <scope>NUCLEOTIDE SEQUENCE [GENOMIC DNA]</scope>
</reference>
<proteinExistence type="inferred from homology"/>
<organismHost>
    <name type="scientific">Homo sapiens</name>
    <name type="common">Human</name>
    <dbReference type="NCBI Taxonomy" id="9606"/>
</organismHost>
<protein>
    <recommendedName>
        <fullName>Phosphoprotein OPG062</fullName>
    </recommendedName>
    <alternativeName>
        <fullName>Phosphoprotein F17</fullName>
    </alternativeName>
</protein>
<sequence>MNSHFASAHTPFYINTKEGRYLVLKAVKVCDVRTVEFEGSKASCVLKVDKPSSPASERRPSSPSRCERMNNPGKQVPFMRTDMLQNMFAANRDNVASRLLS</sequence>